<feature type="chain" id="PRO_0000257990" description="Keratin, type I cytoskeletal 10">
    <location>
        <begin position="1"/>
        <end position="568"/>
    </location>
</feature>
<feature type="domain" description="IF rod" evidence="4">
    <location>
        <begin position="136"/>
        <end position="450"/>
    </location>
</feature>
<feature type="region of interest" description="Head" evidence="3">
    <location>
        <begin position="1"/>
        <end position="135"/>
    </location>
</feature>
<feature type="region of interest" description="Disordered" evidence="5">
    <location>
        <begin position="1"/>
        <end position="31"/>
    </location>
</feature>
<feature type="region of interest" description="Coil 1A" evidence="3">
    <location>
        <begin position="136"/>
        <end position="171"/>
    </location>
</feature>
<feature type="region of interest" description="Linker 1" evidence="3">
    <location>
        <begin position="172"/>
        <end position="192"/>
    </location>
</feature>
<feature type="region of interest" description="Coil 1B" evidence="3">
    <location>
        <begin position="193"/>
        <end position="284"/>
    </location>
</feature>
<feature type="region of interest" description="Linker 12" evidence="3">
    <location>
        <begin position="285"/>
        <end position="307"/>
    </location>
</feature>
<feature type="region of interest" description="Coil 2" evidence="3">
    <location>
        <begin position="308"/>
        <end position="446"/>
    </location>
</feature>
<feature type="region of interest" description="Tail" evidence="3">
    <location>
        <begin position="447"/>
        <end position="568"/>
    </location>
</feature>
<feature type="region of interest" description="Disordered" evidence="5">
    <location>
        <begin position="485"/>
        <end position="568"/>
    </location>
</feature>
<feature type="compositionally biased region" description="Low complexity" evidence="5">
    <location>
        <begin position="1"/>
        <end position="15"/>
    </location>
</feature>
<feature type="compositionally biased region" description="Gly residues" evidence="5">
    <location>
        <begin position="16"/>
        <end position="26"/>
    </location>
</feature>
<feature type="compositionally biased region" description="Gly residues" evidence="5">
    <location>
        <begin position="485"/>
        <end position="546"/>
    </location>
</feature>
<feature type="compositionally biased region" description="Low complexity" evidence="5">
    <location>
        <begin position="547"/>
        <end position="568"/>
    </location>
</feature>
<feature type="modified residue" description="Phosphoserine" evidence="2">
    <location>
        <position position="14"/>
    </location>
</feature>
<feature type="modified residue" description="Phosphoserine" evidence="2">
    <location>
        <position position="16"/>
    </location>
</feature>
<feature type="modified residue" description="Phosphoserine" evidence="2">
    <location>
        <position position="36"/>
    </location>
</feature>
<feature type="modified residue" description="Phosphoserine" evidence="2">
    <location>
        <position position="47"/>
    </location>
</feature>
<feature type="modified residue" description="Phosphoserine" evidence="2">
    <location>
        <position position="50"/>
    </location>
</feature>
<feature type="modified residue" description="Phosphoserine" evidence="2">
    <location>
        <position position="160"/>
    </location>
</feature>
<feature type="disulfide bond" description="Interchain" evidence="2">
    <location>
        <position position="391"/>
    </location>
</feature>
<keyword id="KW-0175">Coiled coil</keyword>
<keyword id="KW-0963">Cytoplasm</keyword>
<keyword id="KW-1015">Disulfide bond</keyword>
<keyword id="KW-0403">Intermediate filament</keyword>
<keyword id="KW-0416">Keratin</keyword>
<keyword id="KW-0597">Phosphoprotein</keyword>
<keyword id="KW-1185">Reference proteome</keyword>
<keyword id="KW-0964">Secreted</keyword>
<organism>
    <name type="scientific">Canis lupus familiaris</name>
    <name type="common">Dog</name>
    <name type="synonym">Canis familiaris</name>
    <dbReference type="NCBI Taxonomy" id="9615"/>
    <lineage>
        <taxon>Eukaryota</taxon>
        <taxon>Metazoa</taxon>
        <taxon>Chordata</taxon>
        <taxon>Craniata</taxon>
        <taxon>Vertebrata</taxon>
        <taxon>Euteleostomi</taxon>
        <taxon>Mammalia</taxon>
        <taxon>Eutheria</taxon>
        <taxon>Laurasiatheria</taxon>
        <taxon>Carnivora</taxon>
        <taxon>Caniformia</taxon>
        <taxon>Canidae</taxon>
        <taxon>Canis</taxon>
    </lineage>
</organism>
<protein>
    <recommendedName>
        <fullName>Keratin, type I cytoskeletal 10</fullName>
    </recommendedName>
    <alternativeName>
        <fullName>Cytokeratin-10</fullName>
        <shortName>CK-10</shortName>
    </alternativeName>
    <alternativeName>
        <fullName>Epithelial keratin-10</fullName>
    </alternativeName>
    <alternativeName>
        <fullName>Keratin-10</fullName>
        <shortName>K10</shortName>
    </alternativeName>
</protein>
<accession>Q6EIZ0</accession>
<sequence>MSVRYSSSKQYSSSRSGGGGGGGGGSSFRISSSKGSIGGGFSSGGFSGGSFSRGSSGGGCFGGSSGGYGGLGGGFGGGNFGGGYGSSSFGGGYGGVSFGGGSFGGGSFGGGGFSGGSFGGYGGGYGGDGGLLSGNEKVTMQNLNDRLASYLDKVRALEESNYELEGKIKEWYEKHGNSSQRAPRDYSKYYQTIEDLKNQILNLTTDNANILLQIDNARLAADDFRLKYENEVALRQSVEADINGLRRVLDELTLTKADLEMQIESLTEELAYLKKNHEEEMRDLQNVSTGDVNVEMNAAPGVDLTELLNNMRNQYEQLAEQNRKDAEAWFNEKSKELTTEINSNIEQMSSHKSEITELRRTVQGLEIELQSQLALKQSLEGSLAETEGRYCVQLSQIQAQISSLEEQLQQIRAETECQNAEYQQLLDIKIRLENEIQTYRSLLEGEGSSGGGGYGGGRGGGSSGGGYGGSSGGGYGGSSGGGGYGGGSSGGGGHIGGHSGGHSGSSGGGYGGGSSSGGGGYGGGSSGGGGSHGGSSGGGYGGGSSSSGGHKSSSSGSVGESSSKGPRY</sequence>
<reference evidence="8 9" key="1">
    <citation type="journal article" date="2005" name="DNA Seq.">
        <title>Comparative sequence analysis and radiation hybrid mapping of the canine keratin 10 gene.</title>
        <authorList>
            <person name="Minor J."/>
            <person name="Dunstan R."/>
            <person name="Guyon R."/>
            <person name="Andre C."/>
            <person name="Barnhart K."/>
            <person name="Credille K."/>
        </authorList>
    </citation>
    <scope>NUCLEOTIDE SEQUENCE [GENOMIC DNA]</scope>
    <scope>TISSUE SPECIFICITY</scope>
    <source>
        <tissue evidence="6">Blood</tissue>
    </source>
</reference>
<dbReference type="EMBL" id="AY318944">
    <property type="protein sequence ID" value="AAQ83909.1"/>
    <property type="molecule type" value="Genomic_DNA"/>
</dbReference>
<dbReference type="RefSeq" id="XP_013972065.2">
    <property type="nucleotide sequence ID" value="XM_014116590.3"/>
</dbReference>
<dbReference type="SMR" id="Q6EIZ0"/>
<dbReference type="FunCoup" id="Q6EIZ0">
    <property type="interactions" value="15"/>
</dbReference>
<dbReference type="STRING" id="9615.ENSCAFP00000023577"/>
<dbReference type="PaxDb" id="9612-ENSCAFP00000023577"/>
<dbReference type="Ensembl" id="ENSCAFT00000025391.5">
    <property type="protein sequence ID" value="ENSCAFP00000023577.4"/>
    <property type="gene ID" value="ENSCAFG00000016007.5"/>
</dbReference>
<dbReference type="Ensembl" id="ENSCAFT00030031038.1">
    <property type="protein sequence ID" value="ENSCAFP00030027077.1"/>
    <property type="gene ID" value="ENSCAFG00030016765.1"/>
</dbReference>
<dbReference type="GeneID" id="491006"/>
<dbReference type="CTD" id="3858"/>
<dbReference type="VGNC" id="VGNC:42516">
    <property type="gene designation" value="KRT10"/>
</dbReference>
<dbReference type="eggNOG" id="ENOG502QTM6">
    <property type="taxonomic scope" value="Eukaryota"/>
</dbReference>
<dbReference type="InParanoid" id="Q6EIZ0"/>
<dbReference type="OrthoDB" id="2441647at2759"/>
<dbReference type="Reactome" id="R-CFA-6805567">
    <property type="pathway name" value="Keratinization"/>
</dbReference>
<dbReference type="Reactome" id="R-CFA-6809371">
    <property type="pathway name" value="Formation of the cornified envelope"/>
</dbReference>
<dbReference type="Proteomes" id="UP000002254">
    <property type="component" value="Chromosome 9"/>
</dbReference>
<dbReference type="Proteomes" id="UP000694429">
    <property type="component" value="Chromosome 9"/>
</dbReference>
<dbReference type="Proteomes" id="UP000694542">
    <property type="component" value="Unplaced"/>
</dbReference>
<dbReference type="Proteomes" id="UP000805418">
    <property type="component" value="Unplaced"/>
</dbReference>
<dbReference type="GO" id="GO:0009986">
    <property type="term" value="C:cell surface"/>
    <property type="evidence" value="ECO:0007669"/>
    <property type="project" value="UniProtKB-SubCell"/>
</dbReference>
<dbReference type="GO" id="GO:0005737">
    <property type="term" value="C:cytoplasm"/>
    <property type="evidence" value="ECO:0000250"/>
    <property type="project" value="UniProtKB"/>
</dbReference>
<dbReference type="GO" id="GO:0005856">
    <property type="term" value="C:cytoskeleton"/>
    <property type="evidence" value="ECO:0000318"/>
    <property type="project" value="GO_Central"/>
</dbReference>
<dbReference type="GO" id="GO:0005576">
    <property type="term" value="C:extracellular region"/>
    <property type="evidence" value="ECO:0007669"/>
    <property type="project" value="UniProtKB-SubCell"/>
</dbReference>
<dbReference type="GO" id="GO:0045095">
    <property type="term" value="C:keratin filament"/>
    <property type="evidence" value="ECO:0000318"/>
    <property type="project" value="GO_Central"/>
</dbReference>
<dbReference type="GO" id="GO:0046982">
    <property type="term" value="F:protein heterodimerization activity"/>
    <property type="evidence" value="ECO:0000250"/>
    <property type="project" value="UniProtKB"/>
</dbReference>
<dbReference type="GO" id="GO:0030280">
    <property type="term" value="F:structural constituent of skin epidermis"/>
    <property type="evidence" value="ECO:0000318"/>
    <property type="project" value="GO_Central"/>
</dbReference>
<dbReference type="GO" id="GO:0008544">
    <property type="term" value="P:epidermis development"/>
    <property type="evidence" value="ECO:0000318"/>
    <property type="project" value="GO_Central"/>
</dbReference>
<dbReference type="GO" id="GO:0030855">
    <property type="term" value="P:epithelial cell differentiation"/>
    <property type="evidence" value="ECO:0000318"/>
    <property type="project" value="GO_Central"/>
</dbReference>
<dbReference type="GO" id="GO:0045109">
    <property type="term" value="P:intermediate filament organization"/>
    <property type="evidence" value="ECO:0000318"/>
    <property type="project" value="GO_Central"/>
</dbReference>
<dbReference type="GO" id="GO:0045684">
    <property type="term" value="P:positive regulation of epidermis development"/>
    <property type="evidence" value="ECO:0000250"/>
    <property type="project" value="UniProtKB"/>
</dbReference>
<dbReference type="GO" id="GO:0051290">
    <property type="term" value="P:protein heterotetramerization"/>
    <property type="evidence" value="ECO:0000250"/>
    <property type="project" value="UniProtKB"/>
</dbReference>
<dbReference type="FunFam" id="1.20.5.1160:FF:000002">
    <property type="entry name" value="Type I keratin 10"/>
    <property type="match status" value="1"/>
</dbReference>
<dbReference type="FunFam" id="1.20.5.170:FF:000002">
    <property type="entry name" value="Type I keratin KA11"/>
    <property type="match status" value="1"/>
</dbReference>
<dbReference type="FunFam" id="1.20.5.500:FF:000001">
    <property type="entry name" value="Type II keratin 23"/>
    <property type="match status" value="1"/>
</dbReference>
<dbReference type="Gene3D" id="1.20.5.170">
    <property type="match status" value="1"/>
</dbReference>
<dbReference type="Gene3D" id="1.20.5.500">
    <property type="entry name" value="Single helix bin"/>
    <property type="match status" value="1"/>
</dbReference>
<dbReference type="Gene3D" id="1.20.5.1160">
    <property type="entry name" value="Vasodilator-stimulated phosphoprotein"/>
    <property type="match status" value="1"/>
</dbReference>
<dbReference type="InterPro" id="IPR018039">
    <property type="entry name" value="IF_conserved"/>
</dbReference>
<dbReference type="InterPro" id="IPR039008">
    <property type="entry name" value="IF_rod_dom"/>
</dbReference>
<dbReference type="InterPro" id="IPR002957">
    <property type="entry name" value="Keratin_I"/>
</dbReference>
<dbReference type="PANTHER" id="PTHR23239">
    <property type="entry name" value="INTERMEDIATE FILAMENT"/>
    <property type="match status" value="1"/>
</dbReference>
<dbReference type="PANTHER" id="PTHR23239:SF137">
    <property type="entry name" value="KERATIN, TYPE I CYTOSKELETAL 10"/>
    <property type="match status" value="1"/>
</dbReference>
<dbReference type="Pfam" id="PF00038">
    <property type="entry name" value="Filament"/>
    <property type="match status" value="1"/>
</dbReference>
<dbReference type="PRINTS" id="PR01248">
    <property type="entry name" value="TYPE1KERATIN"/>
</dbReference>
<dbReference type="SMART" id="SM01391">
    <property type="entry name" value="Filament"/>
    <property type="match status" value="1"/>
</dbReference>
<dbReference type="SUPFAM" id="SSF64593">
    <property type="entry name" value="Intermediate filament protein, coiled coil region"/>
    <property type="match status" value="2"/>
</dbReference>
<dbReference type="PROSITE" id="PS00226">
    <property type="entry name" value="IF_ROD_1"/>
    <property type="match status" value="1"/>
</dbReference>
<dbReference type="PROSITE" id="PS51842">
    <property type="entry name" value="IF_ROD_2"/>
    <property type="match status" value="1"/>
</dbReference>
<proteinExistence type="evidence at transcript level"/>
<comment type="function">
    <text evidence="1">Plays a role in the establishment of the epidermal barrier on plantar skin (By similarity). Involved in the maintenance of cell layer development and keratin filament bundles in suprabasal cells of the epithelium (By similarity).</text>
</comment>
<comment type="subunit">
    <text evidence="1 2">Heterotetramer of two type I and two type II keratins. Heterodimer with KRT1 (By similarity). Two heterodimers of KRT1 and KRT10 form a heterotetramer (By similarity). The KRT10 subunit in the heterotetramer is probably disulfide-linked (By similarity).</text>
</comment>
<comment type="subcellular location">
    <subcellularLocation>
        <location evidence="2">Secreted</location>
        <location evidence="2">Extracellular space</location>
    </subcellularLocation>
    <subcellularLocation>
        <location evidence="2">Cell surface</location>
    </subcellularLocation>
    <subcellularLocation>
        <location evidence="1">Cytoplasm</location>
    </subcellularLocation>
</comment>
<comment type="tissue specificity">
    <text evidence="6">Expressed in skin.</text>
</comment>
<comment type="miscellaneous">
    <text>There are two types of cytoskeletal and microfibrillar keratin: I (acidic; 40-55 kDa) and II (neutral to basic; 56-70 kDa).</text>
</comment>
<comment type="similarity">
    <text evidence="4">Belongs to the intermediate filament family.</text>
</comment>
<evidence type="ECO:0000250" key="1">
    <source>
        <dbReference type="UniProtKB" id="P02535"/>
    </source>
</evidence>
<evidence type="ECO:0000250" key="2">
    <source>
        <dbReference type="UniProtKB" id="P13645"/>
    </source>
</evidence>
<evidence type="ECO:0000255" key="3"/>
<evidence type="ECO:0000255" key="4">
    <source>
        <dbReference type="PROSITE-ProRule" id="PRU01188"/>
    </source>
</evidence>
<evidence type="ECO:0000256" key="5">
    <source>
        <dbReference type="SAM" id="MobiDB-lite"/>
    </source>
</evidence>
<evidence type="ECO:0000269" key="6">
    <source>
    </source>
</evidence>
<evidence type="ECO:0000303" key="7">
    <source>
    </source>
</evidence>
<evidence type="ECO:0000305" key="8"/>
<evidence type="ECO:0000312" key="9">
    <source>
        <dbReference type="EMBL" id="AAQ83909.1"/>
    </source>
</evidence>
<name>K1C10_CANLF</name>
<gene>
    <name evidence="7" type="primary">KRT10</name>
    <name evidence="9" type="synonym">KER10</name>
</gene>